<comment type="function">
    <text evidence="1">Plays a critical role in the incorporation of lipoproteins in the outer membrane after they are released by the LolA protein.</text>
</comment>
<comment type="subunit">
    <text evidence="1">Monomer.</text>
</comment>
<comment type="subcellular location">
    <subcellularLocation>
        <location evidence="1">Cell outer membrane</location>
        <topology evidence="1">Lipid-anchor</topology>
    </subcellularLocation>
</comment>
<comment type="similarity">
    <text evidence="1">Belongs to the LolB family.</text>
</comment>
<gene>
    <name evidence="1" type="primary">lolB</name>
    <name type="ordered locus">CGSHiGG_10085</name>
</gene>
<sequence>MKTFKFFTALFATAILTACTLDMERPTNVQYIDKTDVIWQQHLQKIQKIQSYQAKGQIGYISPTERFSSRFEWQYQNPKSYTLKLYSLISKSTLWIQMHQSGMTISDNNGNQQSAANAKLLLQEIIGMDVPLEHLAYWLKGQPAMNADYQVGTNHLLGAFTYHVDGSQWTADYLTYHSNNSMPENILLKNDSTKQTLKIRVDEWIY</sequence>
<organism>
    <name type="scientific">Haemophilus influenzae (strain PittGG)</name>
    <dbReference type="NCBI Taxonomy" id="374931"/>
    <lineage>
        <taxon>Bacteria</taxon>
        <taxon>Pseudomonadati</taxon>
        <taxon>Pseudomonadota</taxon>
        <taxon>Gammaproteobacteria</taxon>
        <taxon>Pasteurellales</taxon>
        <taxon>Pasteurellaceae</taxon>
        <taxon>Haemophilus</taxon>
    </lineage>
</organism>
<name>LOLB_HAEIG</name>
<proteinExistence type="inferred from homology"/>
<accession>A5UJ22</accession>
<protein>
    <recommendedName>
        <fullName evidence="1">Outer-membrane lipoprotein LolB</fullName>
    </recommendedName>
</protein>
<evidence type="ECO:0000255" key="1">
    <source>
        <dbReference type="HAMAP-Rule" id="MF_00233"/>
    </source>
</evidence>
<keyword id="KW-0998">Cell outer membrane</keyword>
<keyword id="KW-0143">Chaperone</keyword>
<keyword id="KW-0449">Lipoprotein</keyword>
<keyword id="KW-0472">Membrane</keyword>
<keyword id="KW-0564">Palmitate</keyword>
<keyword id="KW-0653">Protein transport</keyword>
<keyword id="KW-0732">Signal</keyword>
<keyword id="KW-0813">Transport</keyword>
<dbReference type="EMBL" id="CP000672">
    <property type="protein sequence ID" value="ABR00778.1"/>
    <property type="molecule type" value="Genomic_DNA"/>
</dbReference>
<dbReference type="SMR" id="A5UJ22"/>
<dbReference type="KEGG" id="hiq:CGSHiGG_10085"/>
<dbReference type="HOGENOM" id="CLU_092816_1_1_6"/>
<dbReference type="Proteomes" id="UP000001990">
    <property type="component" value="Chromosome"/>
</dbReference>
<dbReference type="GO" id="GO:0009279">
    <property type="term" value="C:cell outer membrane"/>
    <property type="evidence" value="ECO:0007669"/>
    <property type="project" value="UniProtKB-SubCell"/>
</dbReference>
<dbReference type="GO" id="GO:0044874">
    <property type="term" value="P:lipoprotein localization to outer membrane"/>
    <property type="evidence" value="ECO:0007669"/>
    <property type="project" value="UniProtKB-UniRule"/>
</dbReference>
<dbReference type="GO" id="GO:0015031">
    <property type="term" value="P:protein transport"/>
    <property type="evidence" value="ECO:0007669"/>
    <property type="project" value="UniProtKB-KW"/>
</dbReference>
<dbReference type="CDD" id="cd16326">
    <property type="entry name" value="LolB"/>
    <property type="match status" value="1"/>
</dbReference>
<dbReference type="Gene3D" id="2.50.20.10">
    <property type="entry name" value="Lipoprotein localisation LolA/LolB/LppX"/>
    <property type="match status" value="1"/>
</dbReference>
<dbReference type="HAMAP" id="MF_00233">
    <property type="entry name" value="LolB"/>
    <property type="match status" value="1"/>
</dbReference>
<dbReference type="InterPro" id="IPR029046">
    <property type="entry name" value="LolA/LolB/LppX"/>
</dbReference>
<dbReference type="InterPro" id="IPR004565">
    <property type="entry name" value="OM_lipoprot_LolB"/>
</dbReference>
<dbReference type="NCBIfam" id="TIGR00548">
    <property type="entry name" value="lolB"/>
    <property type="match status" value="1"/>
</dbReference>
<dbReference type="Pfam" id="PF03550">
    <property type="entry name" value="LolB"/>
    <property type="match status" value="1"/>
</dbReference>
<dbReference type="SUPFAM" id="SSF89392">
    <property type="entry name" value="Prokaryotic lipoproteins and lipoprotein localization factors"/>
    <property type="match status" value="1"/>
</dbReference>
<dbReference type="PROSITE" id="PS51257">
    <property type="entry name" value="PROKAR_LIPOPROTEIN"/>
    <property type="match status" value="1"/>
</dbReference>
<feature type="signal peptide" evidence="1">
    <location>
        <begin position="1"/>
        <end position="18"/>
    </location>
</feature>
<feature type="chain" id="PRO_0000336607" description="Outer-membrane lipoprotein LolB">
    <location>
        <begin position="19"/>
        <end position="206"/>
    </location>
</feature>
<feature type="lipid moiety-binding region" description="N-palmitoyl cysteine" evidence="1">
    <location>
        <position position="19"/>
    </location>
</feature>
<feature type="lipid moiety-binding region" description="S-diacylglycerol cysteine" evidence="1">
    <location>
        <position position="19"/>
    </location>
</feature>
<reference key="1">
    <citation type="journal article" date="2007" name="Genome Biol.">
        <title>Characterization and modeling of the Haemophilus influenzae core and supragenomes based on the complete genomic sequences of Rd and 12 clinical nontypeable strains.</title>
        <authorList>
            <person name="Hogg J.S."/>
            <person name="Hu F.Z."/>
            <person name="Janto B."/>
            <person name="Boissy R."/>
            <person name="Hayes J."/>
            <person name="Keefe R."/>
            <person name="Post J.C."/>
            <person name="Ehrlich G.D."/>
        </authorList>
    </citation>
    <scope>NUCLEOTIDE SEQUENCE [LARGE SCALE GENOMIC DNA]</scope>
    <source>
        <strain>PittGG</strain>
    </source>
</reference>